<organism>
    <name type="scientific">Arabidopsis thaliana</name>
    <name type="common">Mouse-ear cress</name>
    <dbReference type="NCBI Taxonomy" id="3702"/>
    <lineage>
        <taxon>Eukaryota</taxon>
        <taxon>Viridiplantae</taxon>
        <taxon>Streptophyta</taxon>
        <taxon>Embryophyta</taxon>
        <taxon>Tracheophyta</taxon>
        <taxon>Spermatophyta</taxon>
        <taxon>Magnoliopsida</taxon>
        <taxon>eudicotyledons</taxon>
        <taxon>Gunneridae</taxon>
        <taxon>Pentapetalae</taxon>
        <taxon>rosids</taxon>
        <taxon>malvids</taxon>
        <taxon>Brassicales</taxon>
        <taxon>Brassicaceae</taxon>
        <taxon>Camelineae</taxon>
        <taxon>Arabidopsis</taxon>
    </lineage>
</organism>
<reference key="1">
    <citation type="journal article" date="1999" name="Nature">
        <title>Sequence and analysis of chromosome 2 of the plant Arabidopsis thaliana.</title>
        <authorList>
            <person name="Lin X."/>
            <person name="Kaul S."/>
            <person name="Rounsley S.D."/>
            <person name="Shea T.P."/>
            <person name="Benito M.-I."/>
            <person name="Town C.D."/>
            <person name="Fujii C.Y."/>
            <person name="Mason T.M."/>
            <person name="Bowman C.L."/>
            <person name="Barnstead M.E."/>
            <person name="Feldblyum T.V."/>
            <person name="Buell C.R."/>
            <person name="Ketchum K.A."/>
            <person name="Lee J.J."/>
            <person name="Ronning C.M."/>
            <person name="Koo H.L."/>
            <person name="Moffat K.S."/>
            <person name="Cronin L.A."/>
            <person name="Shen M."/>
            <person name="Pai G."/>
            <person name="Van Aken S."/>
            <person name="Umayam L."/>
            <person name="Tallon L.J."/>
            <person name="Gill J.E."/>
            <person name="Adams M.D."/>
            <person name="Carrera A.J."/>
            <person name="Creasy T.H."/>
            <person name="Goodman H.M."/>
            <person name="Somerville C.R."/>
            <person name="Copenhaver G.P."/>
            <person name="Preuss D."/>
            <person name="Nierman W.C."/>
            <person name="White O."/>
            <person name="Eisen J.A."/>
            <person name="Salzberg S.L."/>
            <person name="Fraser C.M."/>
            <person name="Venter J.C."/>
        </authorList>
    </citation>
    <scope>NUCLEOTIDE SEQUENCE [LARGE SCALE GENOMIC DNA]</scope>
    <source>
        <strain>cv. Columbia</strain>
    </source>
</reference>
<reference key="2">
    <citation type="journal article" date="2017" name="Plant J.">
        <title>Araport11: a complete reannotation of the Arabidopsis thaliana reference genome.</title>
        <authorList>
            <person name="Cheng C.Y."/>
            <person name="Krishnakumar V."/>
            <person name="Chan A.P."/>
            <person name="Thibaud-Nissen F."/>
            <person name="Schobel S."/>
            <person name="Town C.D."/>
        </authorList>
    </citation>
    <scope>GENOME REANNOTATION</scope>
    <source>
        <strain>cv. Columbia</strain>
    </source>
</reference>
<reference key="3">
    <citation type="journal article" date="2002" name="Science">
        <title>Functional annotation of a full-length Arabidopsis cDNA collection.</title>
        <authorList>
            <person name="Seki M."/>
            <person name="Narusaka M."/>
            <person name="Kamiya A."/>
            <person name="Ishida J."/>
            <person name="Satou M."/>
            <person name="Sakurai T."/>
            <person name="Nakajima M."/>
            <person name="Enju A."/>
            <person name="Akiyama K."/>
            <person name="Oono Y."/>
            <person name="Muramatsu M."/>
            <person name="Hayashizaki Y."/>
            <person name="Kawai J."/>
            <person name="Carninci P."/>
            <person name="Itoh M."/>
            <person name="Ishii Y."/>
            <person name="Arakawa T."/>
            <person name="Shibata K."/>
            <person name="Shinagawa A."/>
            <person name="Shinozaki K."/>
        </authorList>
    </citation>
    <scope>NUCLEOTIDE SEQUENCE [LARGE SCALE MRNA] (ISOFORM 1)</scope>
    <source>
        <strain>cv. Columbia</strain>
    </source>
</reference>
<reference key="4">
    <citation type="journal article" date="2003" name="Science">
        <title>Empirical analysis of transcriptional activity in the Arabidopsis genome.</title>
        <authorList>
            <person name="Yamada K."/>
            <person name="Lim J."/>
            <person name="Dale J.M."/>
            <person name="Chen H."/>
            <person name="Shinn P."/>
            <person name="Palm C.J."/>
            <person name="Southwick A.M."/>
            <person name="Wu H.C."/>
            <person name="Kim C.J."/>
            <person name="Nguyen M."/>
            <person name="Pham P.K."/>
            <person name="Cheuk R.F."/>
            <person name="Karlin-Newmann G."/>
            <person name="Liu S.X."/>
            <person name="Lam B."/>
            <person name="Sakano H."/>
            <person name="Wu T."/>
            <person name="Yu G."/>
            <person name="Miranda M."/>
            <person name="Quach H.L."/>
            <person name="Tripp M."/>
            <person name="Chang C.H."/>
            <person name="Lee J.M."/>
            <person name="Toriumi M.J."/>
            <person name="Chan M.M."/>
            <person name="Tang C.C."/>
            <person name="Onodera C.S."/>
            <person name="Deng J.M."/>
            <person name="Akiyama K."/>
            <person name="Ansari Y."/>
            <person name="Arakawa T."/>
            <person name="Banh J."/>
            <person name="Banno F."/>
            <person name="Bowser L."/>
            <person name="Brooks S.Y."/>
            <person name="Carninci P."/>
            <person name="Chao Q."/>
            <person name="Choy N."/>
            <person name="Enju A."/>
            <person name="Goldsmith A.D."/>
            <person name="Gurjal M."/>
            <person name="Hansen N.F."/>
            <person name="Hayashizaki Y."/>
            <person name="Johnson-Hopson C."/>
            <person name="Hsuan V.W."/>
            <person name="Iida K."/>
            <person name="Karnes M."/>
            <person name="Khan S."/>
            <person name="Koesema E."/>
            <person name="Ishida J."/>
            <person name="Jiang P.X."/>
            <person name="Jones T."/>
            <person name="Kawai J."/>
            <person name="Kamiya A."/>
            <person name="Meyers C."/>
            <person name="Nakajima M."/>
            <person name="Narusaka M."/>
            <person name="Seki M."/>
            <person name="Sakurai T."/>
            <person name="Satou M."/>
            <person name="Tamse R."/>
            <person name="Vaysberg M."/>
            <person name="Wallender E.K."/>
            <person name="Wong C."/>
            <person name="Yamamura Y."/>
            <person name="Yuan S."/>
            <person name="Shinozaki K."/>
            <person name="Davis R.W."/>
            <person name="Theologis A."/>
            <person name="Ecker J.R."/>
        </authorList>
    </citation>
    <scope>NUCLEOTIDE SEQUENCE [LARGE SCALE MRNA] (ISOFORM 1)</scope>
    <source>
        <strain>cv. Columbia</strain>
    </source>
</reference>
<reference key="5">
    <citation type="journal article" date="2006" name="BMC Genomics">
        <title>The maize INDETERMINATE1 flowering time regulator defines a highly conserved zinc finger protein family in higher plants.</title>
        <authorList>
            <person name="Colasanti J."/>
            <person name="Tremblay R."/>
            <person name="Wong A.Y."/>
            <person name="Coneva V."/>
            <person name="Kozaki A."/>
            <person name="Mable B.K."/>
        </authorList>
    </citation>
    <scope>GENE FAMILY</scope>
    <scope>NOMENCLATURE</scope>
</reference>
<reference key="6">
    <citation type="journal article" date="2006" name="Gene">
        <title>Eukaryotic transcription factors in plastids--Bioinformatic assessment and implications for the evolution of gene expression machineries in plants.</title>
        <authorList>
            <person name="Wagner R."/>
            <person name="Pfannschmidt T."/>
        </authorList>
    </citation>
    <scope>SUBCELLULAR LOCATION</scope>
</reference>
<reference key="7">
    <citation type="journal article" date="2007" name="Plant Cell">
        <title>Global analysis of della direct targets in early gibberellin signaling in Arabidopsis.</title>
        <authorList>
            <person name="Zentella R."/>
            <person name="Zhang Z.L."/>
            <person name="Park M."/>
            <person name="Thomas S.G."/>
            <person name="Endo A."/>
            <person name="Murase K."/>
            <person name="Fleet C.M."/>
            <person name="Jikumaru Y."/>
            <person name="Nambara E."/>
            <person name="Kamiya Y."/>
            <person name="Sun T.P."/>
        </authorList>
    </citation>
    <scope>INDUCTION BY GIBBERELLIN</scope>
</reference>
<reference key="8">
    <citation type="journal article" date="2009" name="Plant Physiol.">
        <title>Large-scale Arabidopsis phosphoproteome profiling reveals novel chloroplast kinase substrates and phosphorylation networks.</title>
        <authorList>
            <person name="Reiland S."/>
            <person name="Messerli G."/>
            <person name="Baerenfaller K."/>
            <person name="Gerrits B."/>
            <person name="Endler A."/>
            <person name="Grossmann J."/>
            <person name="Gruissem W."/>
            <person name="Baginsky S."/>
        </authorList>
    </citation>
    <scope>PHOSPHORYLATION [LARGE SCALE ANALYSIS] AT SER-73</scope>
    <scope>IDENTIFICATION BY MASS SPECTROMETRY [LARGE SCALE ANALYSIS]</scope>
</reference>
<reference key="9">
    <citation type="journal article" date="2009" name="Plant Physiol.">
        <title>Coordination of plastid protein import and nuclear gene expression by plastid-to-nucleus retrograde signaling.</title>
        <authorList>
            <person name="Kakizaki T."/>
            <person name="Matsumura H."/>
            <person name="Nakayama K."/>
            <person name="Che F.S."/>
            <person name="Terauchi R."/>
            <person name="Inaba T."/>
        </authorList>
    </citation>
    <scope>FUNCTION</scope>
</reference>
<reference key="10">
    <citation type="journal article" date="2014" name="Proc. Natl. Acad. Sci. U.S.A.">
        <title>DELLA protein functions as a transcriptional activator through the DNA binding of the indeterminate domain family proteins.</title>
        <authorList>
            <person name="Yoshida H."/>
            <person name="Hirano K."/>
            <person name="Sato T."/>
            <person name="Mitsuda N."/>
            <person name="Nomoto M."/>
            <person name="Maeo K."/>
            <person name="Koketsu E."/>
            <person name="Mitani R."/>
            <person name="Kawamura M."/>
            <person name="Ishiguro S."/>
            <person name="Tada Y."/>
            <person name="Ohme-Takagi M."/>
            <person name="Matsuoka M."/>
            <person name="Ueguchi-Tanaka M."/>
        </authorList>
    </citation>
    <scope>FUNCTION</scope>
    <scope>INTERACTION WITH RGA AND SCL3</scope>
    <scope>SUBCELLULAR LOCATION</scope>
</reference>
<gene>
    <name evidence="7" type="primary">IDD4</name>
    <name evidence="12" type="ordered locus">At2g02080</name>
    <name evidence="13" type="ORF">F5O4.15</name>
</gene>
<feature type="transit peptide" description="Chloroplast" evidence="2">
    <location>
        <begin position="1"/>
        <end position="70"/>
    </location>
</feature>
<feature type="chain" id="PRO_0000431540" description="Protein indeterminate-domain 4, chloroplastic">
    <location>
        <begin position="71"/>
        <end position="516"/>
    </location>
</feature>
<feature type="zinc finger region" description="C2H2-type 1" evidence="3">
    <location>
        <begin position="83"/>
        <end position="105"/>
    </location>
</feature>
<feature type="zinc finger region" description="C2H2-type 2" evidence="8">
    <location>
        <begin position="124"/>
        <end position="154"/>
    </location>
</feature>
<feature type="zinc finger region" description="C2H2-type 2; degenerate" evidence="3">
    <location>
        <begin position="159"/>
        <end position="182"/>
    </location>
</feature>
<feature type="zinc finger region" description="CCHC-type 2; atypical" evidence="8">
    <location>
        <begin position="186"/>
        <end position="209"/>
    </location>
</feature>
<feature type="region of interest" description="Disordered" evidence="5">
    <location>
        <begin position="1"/>
        <end position="68"/>
    </location>
</feature>
<feature type="region of interest" description="SHR-binding" evidence="1">
    <location>
        <begin position="196"/>
        <end position="208"/>
    </location>
</feature>
<feature type="region of interest" description="Disordered" evidence="5">
    <location>
        <begin position="483"/>
        <end position="516"/>
    </location>
</feature>
<feature type="short sequence motif" description="Nuclear localization signal" evidence="4">
    <location>
        <begin position="146"/>
        <end position="153"/>
    </location>
</feature>
<feature type="compositionally biased region" description="Low complexity" evidence="5">
    <location>
        <begin position="1"/>
        <end position="26"/>
    </location>
</feature>
<feature type="compositionally biased region" description="Gly residues" evidence="5">
    <location>
        <begin position="484"/>
        <end position="495"/>
    </location>
</feature>
<feature type="binding site" evidence="1">
    <location>
        <position position="161"/>
    </location>
    <ligand>
        <name>Zn(2+)</name>
        <dbReference type="ChEBI" id="CHEBI:29105"/>
        <label>1</label>
    </ligand>
</feature>
<feature type="binding site" evidence="1">
    <location>
        <position position="164"/>
    </location>
    <ligand>
        <name>Zn(2+)</name>
        <dbReference type="ChEBI" id="CHEBI:29105"/>
        <label>1</label>
    </ligand>
</feature>
<feature type="binding site" evidence="1">
    <location>
        <position position="177"/>
    </location>
    <ligand>
        <name>Zn(2+)</name>
        <dbReference type="ChEBI" id="CHEBI:29105"/>
        <label>1</label>
    </ligand>
</feature>
<feature type="binding site" evidence="1">
    <location>
        <position position="181"/>
    </location>
    <ligand>
        <name>Zn(2+)</name>
        <dbReference type="ChEBI" id="CHEBI:29105"/>
        <label>1</label>
    </ligand>
</feature>
<feature type="binding site" evidence="1">
    <location>
        <position position="188"/>
    </location>
    <ligand>
        <name>Zn(2+)</name>
        <dbReference type="ChEBI" id="CHEBI:29105"/>
        <label>2</label>
    </ligand>
</feature>
<feature type="binding site" evidence="1">
    <location>
        <position position="190"/>
    </location>
    <ligand>
        <name>Zn(2+)</name>
        <dbReference type="ChEBI" id="CHEBI:29105"/>
        <label>2</label>
    </ligand>
</feature>
<feature type="binding site" evidence="1">
    <location>
        <position position="203"/>
    </location>
    <ligand>
        <name>Zn(2+)</name>
        <dbReference type="ChEBI" id="CHEBI:29105"/>
        <label>2</label>
    </ligand>
</feature>
<feature type="binding site" evidence="1">
    <location>
        <position position="207"/>
    </location>
    <ligand>
        <name>Zn(2+)</name>
        <dbReference type="ChEBI" id="CHEBI:29105"/>
        <label>2</label>
    </ligand>
</feature>
<feature type="modified residue" description="Phosphoserine" evidence="14">
    <location>
        <position position="73"/>
    </location>
</feature>
<feature type="splice variant" id="VSP_057328" description="In isoform 2.">
    <location>
        <begin position="1"/>
        <end position="77"/>
    </location>
</feature>
<proteinExistence type="evidence at protein level"/>
<sequence>MSSSSYNTSVIPSSSSSAQPFFITSSGTGDNDFNRKDTFMSMIQQPNSSAPPPKKRRNQPGNPNPDAEVVALSPKTLMATNRFICDVCNKGFQREQNLQLHRRGHNLPWKLKQKSTKEVKRKVYLCPEPTCVHHDPSRALGDLTGIKKHYYRKHGEKKWKCEKCSKRYAVQSDWKAHSKTCGTKEYRCDCGTIFSRRDSYITHRAFCDALIQETARNPTVSFTSMTAASSGVGSGGIYGRLGGGSALSHHHLSDHPNFGFNPLVGYNLNIASSDNRRDFIPQSSNPNFLIQSASSQGMLNTTPNNNNQSFMNQHGLIQFDPVDNINLKSSGTNNSFFNLGFFQENTKNSETSLPSLYSTDVLVHHREENLNAGSNVSATALLQKATQMGSVTSNDPSALFRGLASSSNSSSVIANHFGGGRIMENDNNGNLQGLMNSLAAVNGGGGSGGSIFDVQFGDNGNMSGSDKLTLDFLGVGGMVRNVNRGGGGGGRGSARGGVSLDGEAKFPEQNYPFGRG</sequence>
<name>IDD4_ARATH</name>
<comment type="function">
    <text evidence="6 11">Transcription factor that may act a transcriptional activator of nuclear-encoded photosynthetic gene expression (Probable). Binds DNA via its zinc fingers (PubMed:24821766). Recognizes and binds to SCL3 promoter sequence 5'-AGACAA-3' to promote its expression when in complex with RGA (PubMed:24821766).</text>
</comment>
<comment type="subunit">
    <text evidence="6">Binds to RGA and SCL3 competitively in the nucleus.</text>
</comment>
<comment type="subcellular location">
    <molecule>Isoform 1</molecule>
    <subcellularLocation>
        <location evidence="9">Plastid</location>
        <location evidence="9">Chloroplast</location>
    </subcellularLocation>
</comment>
<comment type="subcellular location">
    <molecule>Isoform 2</molecule>
    <subcellularLocation>
        <location evidence="4 6">Nucleus</location>
    </subcellularLocation>
</comment>
<comment type="alternative products">
    <event type="alternative splicing"/>
    <isoform>
        <id>Q8GYC1-1</id>
        <name>1</name>
        <sequence type="displayed"/>
    </isoform>
    <isoform>
        <id>Q8GYC1-2</id>
        <name>2</name>
        <sequence type="described" ref="VSP_057328"/>
    </isoform>
</comment>
<comment type="induction">
    <text evidence="10">Down-regulated by gibberellin.</text>
</comment>
<keyword id="KW-0010">Activator</keyword>
<keyword id="KW-0025">Alternative splicing</keyword>
<keyword id="KW-0150">Chloroplast</keyword>
<keyword id="KW-0238">DNA-binding</keyword>
<keyword id="KW-0479">Metal-binding</keyword>
<keyword id="KW-0539">Nucleus</keyword>
<keyword id="KW-0597">Phosphoprotein</keyword>
<keyword id="KW-0934">Plastid</keyword>
<keyword id="KW-1185">Reference proteome</keyword>
<keyword id="KW-0677">Repeat</keyword>
<keyword id="KW-0804">Transcription</keyword>
<keyword id="KW-0805">Transcription regulation</keyword>
<keyword id="KW-0809">Transit peptide</keyword>
<keyword id="KW-0862">Zinc</keyword>
<keyword id="KW-0863">Zinc-finger</keyword>
<dbReference type="EMBL" id="AC005936">
    <property type="protein sequence ID" value="AAC97227.1"/>
    <property type="molecule type" value="Genomic_DNA"/>
</dbReference>
<dbReference type="EMBL" id="CP002685">
    <property type="protein sequence ID" value="AEC05543.1"/>
    <property type="molecule type" value="Genomic_DNA"/>
</dbReference>
<dbReference type="EMBL" id="CP002685">
    <property type="protein sequence ID" value="AEC05544.1"/>
    <property type="molecule type" value="Genomic_DNA"/>
</dbReference>
<dbReference type="EMBL" id="CP002685">
    <property type="protein sequence ID" value="ANM63310.1"/>
    <property type="molecule type" value="Genomic_DNA"/>
</dbReference>
<dbReference type="EMBL" id="CP002685">
    <property type="protein sequence ID" value="ANM63311.1"/>
    <property type="molecule type" value="Genomic_DNA"/>
</dbReference>
<dbReference type="EMBL" id="CP002685">
    <property type="protein sequence ID" value="ANM63312.1"/>
    <property type="molecule type" value="Genomic_DNA"/>
</dbReference>
<dbReference type="EMBL" id="CP002685">
    <property type="protein sequence ID" value="ANM63313.1"/>
    <property type="molecule type" value="Genomic_DNA"/>
</dbReference>
<dbReference type="EMBL" id="AK117733">
    <property type="protein sequence ID" value="BAC42382.1"/>
    <property type="molecule type" value="mRNA"/>
</dbReference>
<dbReference type="EMBL" id="BT005897">
    <property type="protein sequence ID" value="AAO64832.1"/>
    <property type="molecule type" value="mRNA"/>
</dbReference>
<dbReference type="PIR" id="G84432">
    <property type="entry name" value="G84432"/>
</dbReference>
<dbReference type="RefSeq" id="NP_001118254.1">
    <molecule id="Q8GYC1-2"/>
    <property type="nucleotide sequence ID" value="NM_001124782.1"/>
</dbReference>
<dbReference type="RefSeq" id="NP_001318178.1">
    <molecule id="Q8GYC1-2"/>
    <property type="nucleotide sequence ID" value="NM_001335092.1"/>
</dbReference>
<dbReference type="RefSeq" id="NP_001325405.1">
    <molecule id="Q8GYC1-1"/>
    <property type="nucleotide sequence ID" value="NM_001335094.1"/>
</dbReference>
<dbReference type="RefSeq" id="NP_001325406.1">
    <molecule id="Q8GYC1-1"/>
    <property type="nucleotide sequence ID" value="NM_001335093.1"/>
</dbReference>
<dbReference type="RefSeq" id="NP_001325407.1">
    <molecule id="Q8GYC1-1"/>
    <property type="nucleotide sequence ID" value="NM_001335095.1"/>
</dbReference>
<dbReference type="RefSeq" id="NP_178317.2">
    <molecule id="Q8GYC1-1"/>
    <property type="nucleotide sequence ID" value="NM_126269.3"/>
</dbReference>
<dbReference type="FunCoup" id="Q8GYC1">
    <property type="interactions" value="6"/>
</dbReference>
<dbReference type="STRING" id="3702.Q8GYC1"/>
<dbReference type="iPTMnet" id="Q8GYC1"/>
<dbReference type="PaxDb" id="3702-AT2G02080.1"/>
<dbReference type="ProteomicsDB" id="228785">
    <molecule id="Q8GYC1-1"/>
</dbReference>
<dbReference type="EnsemblPlants" id="AT2G02080.1">
    <molecule id="Q8GYC1-1"/>
    <property type="protein sequence ID" value="AT2G02080.1"/>
    <property type="gene ID" value="AT2G02080"/>
</dbReference>
<dbReference type="EnsemblPlants" id="AT2G02080.2">
    <molecule id="Q8GYC1-2"/>
    <property type="protein sequence ID" value="AT2G02080.2"/>
    <property type="gene ID" value="AT2G02080"/>
</dbReference>
<dbReference type="EnsemblPlants" id="AT2G02080.3">
    <molecule id="Q8GYC1-1"/>
    <property type="protein sequence ID" value="AT2G02080.3"/>
    <property type="gene ID" value="AT2G02080"/>
</dbReference>
<dbReference type="EnsemblPlants" id="AT2G02080.4">
    <molecule id="Q8GYC1-1"/>
    <property type="protein sequence ID" value="AT2G02080.4"/>
    <property type="gene ID" value="AT2G02080"/>
</dbReference>
<dbReference type="EnsemblPlants" id="AT2G02080.5">
    <molecule id="Q8GYC1-1"/>
    <property type="protein sequence ID" value="AT2G02080.5"/>
    <property type="gene ID" value="AT2G02080"/>
</dbReference>
<dbReference type="EnsemblPlants" id="AT2G02080.6">
    <molecule id="Q8GYC1-2"/>
    <property type="protein sequence ID" value="AT2G02080.6"/>
    <property type="gene ID" value="AT2G02080"/>
</dbReference>
<dbReference type="GeneID" id="814739"/>
<dbReference type="Gramene" id="AT2G02080.1">
    <molecule id="Q8GYC1-1"/>
    <property type="protein sequence ID" value="AT2G02080.1"/>
    <property type="gene ID" value="AT2G02080"/>
</dbReference>
<dbReference type="Gramene" id="AT2G02080.2">
    <molecule id="Q8GYC1-2"/>
    <property type="protein sequence ID" value="AT2G02080.2"/>
    <property type="gene ID" value="AT2G02080"/>
</dbReference>
<dbReference type="Gramene" id="AT2G02080.3">
    <molecule id="Q8GYC1-1"/>
    <property type="protein sequence ID" value="AT2G02080.3"/>
    <property type="gene ID" value="AT2G02080"/>
</dbReference>
<dbReference type="Gramene" id="AT2G02080.4">
    <molecule id="Q8GYC1-1"/>
    <property type="protein sequence ID" value="AT2G02080.4"/>
    <property type="gene ID" value="AT2G02080"/>
</dbReference>
<dbReference type="Gramene" id="AT2G02080.5">
    <molecule id="Q8GYC1-1"/>
    <property type="protein sequence ID" value="AT2G02080.5"/>
    <property type="gene ID" value="AT2G02080"/>
</dbReference>
<dbReference type="Gramene" id="AT2G02080.6">
    <molecule id="Q8GYC1-2"/>
    <property type="protein sequence ID" value="AT2G02080.6"/>
    <property type="gene ID" value="AT2G02080"/>
</dbReference>
<dbReference type="KEGG" id="ath:AT2G02080"/>
<dbReference type="Araport" id="AT2G02080"/>
<dbReference type="TAIR" id="AT2G02080">
    <property type="gene designation" value="IDD4"/>
</dbReference>
<dbReference type="eggNOG" id="KOG1721">
    <property type="taxonomic scope" value="Eukaryota"/>
</dbReference>
<dbReference type="InParanoid" id="Q8GYC1"/>
<dbReference type="PhylomeDB" id="Q8GYC1"/>
<dbReference type="PRO" id="PR:Q8GYC1"/>
<dbReference type="Proteomes" id="UP000006548">
    <property type="component" value="Chromosome 2"/>
</dbReference>
<dbReference type="ExpressionAtlas" id="Q8GYC1">
    <property type="expression patterns" value="baseline and differential"/>
</dbReference>
<dbReference type="GO" id="GO:0009507">
    <property type="term" value="C:chloroplast"/>
    <property type="evidence" value="ECO:0007669"/>
    <property type="project" value="UniProtKB-SubCell"/>
</dbReference>
<dbReference type="GO" id="GO:0005634">
    <property type="term" value="C:nucleus"/>
    <property type="evidence" value="ECO:0000314"/>
    <property type="project" value="UniProtKB"/>
</dbReference>
<dbReference type="GO" id="GO:0003700">
    <property type="term" value="F:DNA-binding transcription factor activity"/>
    <property type="evidence" value="ECO:0000314"/>
    <property type="project" value="UniProtKB"/>
</dbReference>
<dbReference type="GO" id="GO:0043565">
    <property type="term" value="F:sequence-specific DNA binding"/>
    <property type="evidence" value="ECO:0000314"/>
    <property type="project" value="UniProtKB"/>
</dbReference>
<dbReference type="GO" id="GO:0008270">
    <property type="term" value="F:zinc ion binding"/>
    <property type="evidence" value="ECO:0007669"/>
    <property type="project" value="UniProtKB-KW"/>
</dbReference>
<dbReference type="GO" id="GO:0008356">
    <property type="term" value="P:asymmetric cell division"/>
    <property type="evidence" value="ECO:0000315"/>
    <property type="project" value="TAIR"/>
</dbReference>
<dbReference type="GO" id="GO:0002221">
    <property type="term" value="P:pattern recognition receptor signaling pathway"/>
    <property type="evidence" value="ECO:0000315"/>
    <property type="project" value="TAIR"/>
</dbReference>
<dbReference type="GO" id="GO:0045893">
    <property type="term" value="P:positive regulation of DNA-templated transcription"/>
    <property type="evidence" value="ECO:0000314"/>
    <property type="project" value="UniProtKB"/>
</dbReference>
<dbReference type="GO" id="GO:0048364">
    <property type="term" value="P:root development"/>
    <property type="evidence" value="ECO:0000315"/>
    <property type="project" value="TAIR"/>
</dbReference>
<dbReference type="FunFam" id="3.30.160.60:FF:000554">
    <property type="entry name" value="protein indeterminate-domain 12-like"/>
    <property type="match status" value="1"/>
</dbReference>
<dbReference type="FunFam" id="3.30.160.60:FF:000131">
    <property type="entry name" value="protein indeterminate-domain 5, chloroplastic-like"/>
    <property type="match status" value="1"/>
</dbReference>
<dbReference type="Gene3D" id="3.30.160.60">
    <property type="entry name" value="Classic Zinc Finger"/>
    <property type="match status" value="2"/>
</dbReference>
<dbReference type="InterPro" id="IPR055187">
    <property type="entry name" value="C2CH-3rd_BIRD-IDD"/>
</dbReference>
<dbReference type="InterPro" id="IPR055185">
    <property type="entry name" value="C2CH-4th_BIRD-IDD"/>
</dbReference>
<dbReference type="InterPro" id="IPR055186">
    <property type="entry name" value="C2H2-2nd_BIRD-IDD"/>
</dbReference>
<dbReference type="InterPro" id="IPR031140">
    <property type="entry name" value="IDD1-16"/>
</dbReference>
<dbReference type="InterPro" id="IPR036236">
    <property type="entry name" value="Znf_C2H2_sf"/>
</dbReference>
<dbReference type="InterPro" id="IPR013087">
    <property type="entry name" value="Znf_C2H2_type"/>
</dbReference>
<dbReference type="PANTHER" id="PTHR10593:SF142">
    <property type="entry name" value="PROTEIN INDETERMINATE-DOMAIN 4, CHLOROPLASTIC"/>
    <property type="match status" value="1"/>
</dbReference>
<dbReference type="PANTHER" id="PTHR10593">
    <property type="entry name" value="SERINE/THREONINE-PROTEIN KINASE RIO"/>
    <property type="match status" value="1"/>
</dbReference>
<dbReference type="Pfam" id="PF22995">
    <property type="entry name" value="C2CH-3rd_BIRD-IDD"/>
    <property type="match status" value="1"/>
</dbReference>
<dbReference type="Pfam" id="PF22992">
    <property type="entry name" value="C2CH-4th_BIRD-IDD"/>
    <property type="match status" value="1"/>
</dbReference>
<dbReference type="Pfam" id="PF22996">
    <property type="entry name" value="C2H2-2nd_BIRD-IDD"/>
    <property type="match status" value="1"/>
</dbReference>
<dbReference type="Pfam" id="PF13912">
    <property type="entry name" value="zf-C2H2_6"/>
    <property type="match status" value="1"/>
</dbReference>
<dbReference type="SMART" id="SM00355">
    <property type="entry name" value="ZnF_C2H2"/>
    <property type="match status" value="3"/>
</dbReference>
<dbReference type="SUPFAM" id="SSF57667">
    <property type="entry name" value="beta-beta-alpha zinc fingers"/>
    <property type="match status" value="1"/>
</dbReference>
<dbReference type="PROSITE" id="PS00028">
    <property type="entry name" value="ZINC_FINGER_C2H2_1"/>
    <property type="match status" value="1"/>
</dbReference>
<dbReference type="PROSITE" id="PS50157">
    <property type="entry name" value="ZINC_FINGER_C2H2_2"/>
    <property type="match status" value="1"/>
</dbReference>
<accession>Q8GYC1</accession>
<accession>Q9ZUL4</accession>
<evidence type="ECO:0000250" key="1">
    <source>
        <dbReference type="UniProtKB" id="Q700D2"/>
    </source>
</evidence>
<evidence type="ECO:0000255" key="2"/>
<evidence type="ECO:0000255" key="3">
    <source>
        <dbReference type="PROSITE-ProRule" id="PRU00042"/>
    </source>
</evidence>
<evidence type="ECO:0000255" key="4">
    <source>
        <dbReference type="PROSITE-ProRule" id="PRU00768"/>
    </source>
</evidence>
<evidence type="ECO:0000256" key="5">
    <source>
        <dbReference type="SAM" id="MobiDB-lite"/>
    </source>
</evidence>
<evidence type="ECO:0000269" key="6">
    <source>
    </source>
</evidence>
<evidence type="ECO:0000303" key="7">
    <source>
    </source>
</evidence>
<evidence type="ECO:0000305" key="8"/>
<evidence type="ECO:0000305" key="9">
    <source>
    </source>
</evidence>
<evidence type="ECO:0000305" key="10">
    <source>
    </source>
</evidence>
<evidence type="ECO:0000305" key="11">
    <source>
    </source>
</evidence>
<evidence type="ECO:0000312" key="12">
    <source>
        <dbReference type="Araport" id="AT2G02080"/>
    </source>
</evidence>
<evidence type="ECO:0000312" key="13">
    <source>
        <dbReference type="EMBL" id="BAC42382.1"/>
    </source>
</evidence>
<evidence type="ECO:0007744" key="14">
    <source>
    </source>
</evidence>
<protein>
    <recommendedName>
        <fullName evidence="7">Protein indeterminate-domain 4, chloroplastic</fullName>
    </recommendedName>
</protein>